<evidence type="ECO:0000255" key="1">
    <source>
        <dbReference type="HAMAP-Rule" id="MF_00182"/>
    </source>
</evidence>
<accession>Q7U6Z1</accession>
<comment type="function">
    <text evidence="1">Attaches a formyl group to the free amino group of methionyl-tRNA(fMet). The formyl group appears to play a dual role in the initiator identity of N-formylmethionyl-tRNA by promoting its recognition by IF2 and preventing the misappropriation of this tRNA by the elongation apparatus.</text>
</comment>
<comment type="catalytic activity">
    <reaction evidence="1">
        <text>L-methionyl-tRNA(fMet) + (6R)-10-formyltetrahydrofolate = N-formyl-L-methionyl-tRNA(fMet) + (6S)-5,6,7,8-tetrahydrofolate + H(+)</text>
        <dbReference type="Rhea" id="RHEA:24380"/>
        <dbReference type="Rhea" id="RHEA-COMP:9952"/>
        <dbReference type="Rhea" id="RHEA-COMP:9953"/>
        <dbReference type="ChEBI" id="CHEBI:15378"/>
        <dbReference type="ChEBI" id="CHEBI:57453"/>
        <dbReference type="ChEBI" id="CHEBI:78530"/>
        <dbReference type="ChEBI" id="CHEBI:78844"/>
        <dbReference type="ChEBI" id="CHEBI:195366"/>
        <dbReference type="EC" id="2.1.2.9"/>
    </reaction>
</comment>
<comment type="similarity">
    <text evidence="1">Belongs to the Fmt family.</text>
</comment>
<name>FMT_PARMW</name>
<feature type="chain" id="PRO_0000083069" description="Methionyl-tRNA formyltransferase">
    <location>
        <begin position="1"/>
        <end position="338"/>
    </location>
</feature>
<feature type="binding site" evidence="1">
    <location>
        <begin position="110"/>
        <end position="113"/>
    </location>
    <ligand>
        <name>(6S)-5,6,7,8-tetrahydrofolate</name>
        <dbReference type="ChEBI" id="CHEBI:57453"/>
    </ligand>
</feature>
<protein>
    <recommendedName>
        <fullName evidence="1">Methionyl-tRNA formyltransferase</fullName>
        <ecNumber evidence="1">2.1.2.9</ecNumber>
    </recommendedName>
</protein>
<dbReference type="EC" id="2.1.2.9" evidence="1"/>
<dbReference type="EMBL" id="BX569692">
    <property type="protein sequence ID" value="CAE07710.1"/>
    <property type="molecule type" value="Genomic_DNA"/>
</dbReference>
<dbReference type="RefSeq" id="WP_011128060.1">
    <property type="nucleotide sequence ID" value="NC_005070.1"/>
</dbReference>
<dbReference type="SMR" id="Q7U6Z1"/>
<dbReference type="STRING" id="84588.SYNW1195"/>
<dbReference type="KEGG" id="syw:SYNW1195"/>
<dbReference type="eggNOG" id="COG0223">
    <property type="taxonomic scope" value="Bacteria"/>
</dbReference>
<dbReference type="HOGENOM" id="CLU_033347_1_1_3"/>
<dbReference type="Proteomes" id="UP000001422">
    <property type="component" value="Chromosome"/>
</dbReference>
<dbReference type="GO" id="GO:0005829">
    <property type="term" value="C:cytosol"/>
    <property type="evidence" value="ECO:0007669"/>
    <property type="project" value="TreeGrafter"/>
</dbReference>
<dbReference type="GO" id="GO:0004479">
    <property type="term" value="F:methionyl-tRNA formyltransferase activity"/>
    <property type="evidence" value="ECO:0007669"/>
    <property type="project" value="UniProtKB-UniRule"/>
</dbReference>
<dbReference type="CDD" id="cd08646">
    <property type="entry name" value="FMT_core_Met-tRNA-FMT_N"/>
    <property type="match status" value="1"/>
</dbReference>
<dbReference type="CDD" id="cd08704">
    <property type="entry name" value="Met_tRNA_FMT_C"/>
    <property type="match status" value="1"/>
</dbReference>
<dbReference type="Gene3D" id="3.40.50.12230">
    <property type="match status" value="1"/>
</dbReference>
<dbReference type="HAMAP" id="MF_00182">
    <property type="entry name" value="Formyl_trans"/>
    <property type="match status" value="1"/>
</dbReference>
<dbReference type="InterPro" id="IPR005794">
    <property type="entry name" value="Fmt"/>
</dbReference>
<dbReference type="InterPro" id="IPR005793">
    <property type="entry name" value="Formyl_trans_C"/>
</dbReference>
<dbReference type="InterPro" id="IPR002376">
    <property type="entry name" value="Formyl_transf_N"/>
</dbReference>
<dbReference type="InterPro" id="IPR036477">
    <property type="entry name" value="Formyl_transf_N_sf"/>
</dbReference>
<dbReference type="InterPro" id="IPR011034">
    <property type="entry name" value="Formyl_transferase-like_C_sf"/>
</dbReference>
<dbReference type="InterPro" id="IPR044135">
    <property type="entry name" value="Met-tRNA-FMT_C"/>
</dbReference>
<dbReference type="InterPro" id="IPR041711">
    <property type="entry name" value="Met-tRNA-FMT_N"/>
</dbReference>
<dbReference type="NCBIfam" id="TIGR00460">
    <property type="entry name" value="fmt"/>
    <property type="match status" value="1"/>
</dbReference>
<dbReference type="PANTHER" id="PTHR11138">
    <property type="entry name" value="METHIONYL-TRNA FORMYLTRANSFERASE"/>
    <property type="match status" value="1"/>
</dbReference>
<dbReference type="PANTHER" id="PTHR11138:SF5">
    <property type="entry name" value="METHIONYL-TRNA FORMYLTRANSFERASE, MITOCHONDRIAL"/>
    <property type="match status" value="1"/>
</dbReference>
<dbReference type="Pfam" id="PF02911">
    <property type="entry name" value="Formyl_trans_C"/>
    <property type="match status" value="1"/>
</dbReference>
<dbReference type="Pfam" id="PF00551">
    <property type="entry name" value="Formyl_trans_N"/>
    <property type="match status" value="1"/>
</dbReference>
<dbReference type="SUPFAM" id="SSF50486">
    <property type="entry name" value="FMT C-terminal domain-like"/>
    <property type="match status" value="1"/>
</dbReference>
<dbReference type="SUPFAM" id="SSF53328">
    <property type="entry name" value="Formyltransferase"/>
    <property type="match status" value="1"/>
</dbReference>
<proteinExistence type="inferred from homology"/>
<organism>
    <name type="scientific">Parasynechococcus marenigrum (strain WH8102)</name>
    <dbReference type="NCBI Taxonomy" id="84588"/>
    <lineage>
        <taxon>Bacteria</taxon>
        <taxon>Bacillati</taxon>
        <taxon>Cyanobacteriota</taxon>
        <taxon>Cyanophyceae</taxon>
        <taxon>Synechococcales</taxon>
        <taxon>Prochlorococcaceae</taxon>
        <taxon>Parasynechococcus</taxon>
        <taxon>Parasynechococcus marenigrum</taxon>
    </lineage>
</organism>
<keyword id="KW-0648">Protein biosynthesis</keyword>
<keyword id="KW-0808">Transferase</keyword>
<gene>
    <name evidence="1" type="primary">fmt</name>
    <name type="ordered locus">SYNW1195</name>
</gene>
<sequence>MRILYWGTPAYAVPTLRQLHQAGHTIVGVVSQPDRRRGRGQQLVASAVKQEALNLNLPVFTPERIKKDSDCQAQLAALKADASVVVAFGQILPLEVLEQPPLGCWNGHGSLLPRWRGAAPIQWSILDGDAETGVGVMAMEEGLDTGPVLLERRLSIGLQDNAHALAEKLSGLTAELMVEAMPLIEAVGAGPTDERLHRLGVQHQAEASCYARMLCKQDYQIDWSNSALAIHRQVMGLYPGAQTSWNGKRLKLTQTEPLIDRLKDQLSPEAQELVGQWPTGGHAGGTVLACIQDLGLVVSSSGCPLLIREAQLEGKSRSRGQALVQQMAAAEQQSIGDN</sequence>
<reference key="1">
    <citation type="journal article" date="2003" name="Nature">
        <title>The genome of a motile marine Synechococcus.</title>
        <authorList>
            <person name="Palenik B."/>
            <person name="Brahamsha B."/>
            <person name="Larimer F.W."/>
            <person name="Land M.L."/>
            <person name="Hauser L."/>
            <person name="Chain P."/>
            <person name="Lamerdin J.E."/>
            <person name="Regala W."/>
            <person name="Allen E.E."/>
            <person name="McCarren J."/>
            <person name="Paulsen I.T."/>
            <person name="Dufresne A."/>
            <person name="Partensky F."/>
            <person name="Webb E.A."/>
            <person name="Waterbury J."/>
        </authorList>
    </citation>
    <scope>NUCLEOTIDE SEQUENCE [LARGE SCALE GENOMIC DNA]</scope>
    <source>
        <strain>WH8102</strain>
    </source>
</reference>